<gene>
    <name type="ordered locus">At1g17990</name>
    <name type="ORF">F2H15.21</name>
</gene>
<evidence type="ECO:0000250" key="1"/>
<evidence type="ECO:0000305" key="2"/>
<keyword id="KW-0025">Alternative splicing</keyword>
<keyword id="KW-0285">Flavoprotein</keyword>
<keyword id="KW-0288">FMN</keyword>
<keyword id="KW-0521">NADP</keyword>
<keyword id="KW-0560">Oxidoreductase</keyword>
<keyword id="KW-1185">Reference proteome</keyword>
<name>ORL2A_ARATH</name>
<accession>P0DI08</accession>
<accession>Q9C5W1</accession>
<accession>Q9LDU9</accession>
<organism>
    <name type="scientific">Arabidopsis thaliana</name>
    <name type="common">Mouse-ear cress</name>
    <dbReference type="NCBI Taxonomy" id="3702"/>
    <lineage>
        <taxon>Eukaryota</taxon>
        <taxon>Viridiplantae</taxon>
        <taxon>Streptophyta</taxon>
        <taxon>Embryophyta</taxon>
        <taxon>Tracheophyta</taxon>
        <taxon>Spermatophyta</taxon>
        <taxon>Magnoliopsida</taxon>
        <taxon>eudicotyledons</taxon>
        <taxon>Gunneridae</taxon>
        <taxon>Pentapetalae</taxon>
        <taxon>rosids</taxon>
        <taxon>malvids</taxon>
        <taxon>Brassicales</taxon>
        <taxon>Brassicaceae</taxon>
        <taxon>Camelineae</taxon>
        <taxon>Arabidopsis</taxon>
    </lineage>
</organism>
<proteinExistence type="evidence at transcript level"/>
<comment type="function">
    <text evidence="1">Putative oxophytodienoate reductase that may be involved in the biosynthesis or metabolism of oxylipin signaling molecules.</text>
</comment>
<comment type="cofactor">
    <cofactor evidence="1">
        <name>FMN</name>
        <dbReference type="ChEBI" id="CHEBI:58210"/>
    </cofactor>
</comment>
<comment type="alternative products">
    <event type="alternative splicing"/>
    <isoform>
        <id>P0DI08-1</id>
        <name>1</name>
        <sequence type="displayed"/>
    </isoform>
    <text>A number of isoforms are produced. According to EST sequences.</text>
</comment>
<comment type="similarity">
    <text evidence="2">Belongs to the NADH:flavin oxidoreductase/NADH oxidase family.</text>
</comment>
<comment type="sequence caution" evidence="2">
    <conflict type="erroneous gene model prediction">
        <sequence resource="EMBL-CDS" id="AAF97278"/>
    </conflict>
</comment>
<feature type="chain" id="PRO_0000194487" description="Putative 12-oxophytodienoate reductase-like protein 2A">
    <location>
        <begin position="1"/>
        <end position="269"/>
    </location>
</feature>
<feature type="active site" description="Proton donor" evidence="1">
    <location>
        <position position="180"/>
    </location>
</feature>
<feature type="binding site" evidence="1">
    <location>
        <begin position="28"/>
        <end position="30"/>
    </location>
    <ligand>
        <name>FMN</name>
        <dbReference type="ChEBI" id="CHEBI:58210"/>
    </ligand>
</feature>
<feature type="binding site" evidence="1">
    <location>
        <position position="103"/>
    </location>
    <ligand>
        <name>FMN</name>
        <dbReference type="ChEBI" id="CHEBI:58210"/>
    </ligand>
</feature>
<feature type="binding site" evidence="1">
    <location>
        <begin position="175"/>
        <end position="178"/>
    </location>
    <ligand>
        <name>substrate</name>
    </ligand>
</feature>
<feature type="binding site" evidence="1">
    <location>
        <position position="227"/>
    </location>
    <ligand>
        <name>FMN</name>
        <dbReference type="ChEBI" id="CHEBI:58210"/>
    </ligand>
</feature>
<protein>
    <recommendedName>
        <fullName>Putative 12-oxophytodienoate reductase-like protein 2A</fullName>
        <ecNumber>1.3.1.-</ecNumber>
    </recommendedName>
</protein>
<dbReference type="EC" id="1.3.1.-"/>
<dbReference type="EMBL" id="AC034106">
    <property type="protein sequence ID" value="AAF97278.1"/>
    <property type="status" value="ALT_SEQ"/>
    <property type="molecule type" value="Genomic_DNA"/>
</dbReference>
<dbReference type="EMBL" id="CP002684">
    <property type="protein sequence ID" value="AEE29660.1"/>
    <property type="molecule type" value="Genomic_DNA"/>
</dbReference>
<dbReference type="EMBL" id="AK118160">
    <property type="protein sequence ID" value="BAC42784.1"/>
    <property type="molecule type" value="mRNA"/>
</dbReference>
<dbReference type="EMBL" id="AF344314">
    <property type="protein sequence ID" value="AAK06865.1"/>
    <property type="molecule type" value="mRNA"/>
</dbReference>
<dbReference type="EMBL" id="AY063976">
    <property type="status" value="NOT_ANNOTATED_CDS"/>
    <property type="molecule type" value="mRNA"/>
</dbReference>
<dbReference type="PIR" id="F86315">
    <property type="entry name" value="F86315"/>
</dbReference>
<dbReference type="RefSeq" id="NP_173241.2">
    <molecule id="P0DI08-1"/>
    <property type="nucleotide sequence ID" value="NM_101664.5"/>
</dbReference>
<dbReference type="RefSeq" id="NP_849683.1">
    <molecule id="P0DI08-1"/>
    <property type="nucleotide sequence ID" value="NM_179352.5"/>
</dbReference>
<dbReference type="SMR" id="P0DI08"/>
<dbReference type="FunCoup" id="P0DI08">
    <property type="interactions" value="98"/>
</dbReference>
<dbReference type="STRING" id="3702.P0DI08"/>
<dbReference type="iPTMnet" id="P0DI08"/>
<dbReference type="PaxDb" id="3702-AT1G17990.1"/>
<dbReference type="EnsemblPlants" id="AT1G17990.1">
    <molecule id="P0DI08-1"/>
    <property type="protein sequence ID" value="AT1G17990.1"/>
    <property type="gene ID" value="AT1G17990"/>
</dbReference>
<dbReference type="EnsemblPlants" id="AT1G18020.1">
    <molecule id="P0DI08-1"/>
    <property type="protein sequence ID" value="AT1G18020.1"/>
    <property type="gene ID" value="AT1G18020"/>
</dbReference>
<dbReference type="GeneID" id="838379"/>
<dbReference type="Gramene" id="AT1G17990.1">
    <molecule id="P0DI08-1"/>
    <property type="protein sequence ID" value="AT1G17990.1"/>
    <property type="gene ID" value="AT1G17990"/>
</dbReference>
<dbReference type="Gramene" id="AT1G18020.1">
    <molecule id="P0DI08-1"/>
    <property type="protein sequence ID" value="AT1G18020.1"/>
    <property type="gene ID" value="AT1G18020"/>
</dbReference>
<dbReference type="KEGG" id="ath:AT1G17990"/>
<dbReference type="KEGG" id="ath:AT1G18020"/>
<dbReference type="Araport" id="AT1G17990"/>
<dbReference type="TAIR" id="AT1G17990"/>
<dbReference type="eggNOG" id="KOG0134">
    <property type="taxonomic scope" value="Eukaryota"/>
</dbReference>
<dbReference type="HOGENOM" id="CLU_012153_0_1_1"/>
<dbReference type="InParanoid" id="P0DI08"/>
<dbReference type="OMA" id="SWRIRIC"/>
<dbReference type="OrthoDB" id="1663137at2759"/>
<dbReference type="PhylomeDB" id="P0DI08"/>
<dbReference type="PRO" id="PR:P0DI08"/>
<dbReference type="Proteomes" id="UP000006548">
    <property type="component" value="Chromosome 1"/>
</dbReference>
<dbReference type="ExpressionAtlas" id="P0DI08">
    <property type="expression patterns" value="baseline and differential"/>
</dbReference>
<dbReference type="GO" id="GO:0005634">
    <property type="term" value="C:nucleus"/>
    <property type="evidence" value="ECO:0007005"/>
    <property type="project" value="TAIR"/>
</dbReference>
<dbReference type="GO" id="GO:0010181">
    <property type="term" value="F:FMN binding"/>
    <property type="evidence" value="ECO:0007669"/>
    <property type="project" value="InterPro"/>
</dbReference>
<dbReference type="GO" id="GO:0016491">
    <property type="term" value="F:oxidoreductase activity"/>
    <property type="evidence" value="ECO:0007669"/>
    <property type="project" value="UniProtKB-KW"/>
</dbReference>
<dbReference type="CDD" id="cd02933">
    <property type="entry name" value="OYE_like_FMN"/>
    <property type="match status" value="1"/>
</dbReference>
<dbReference type="FunFam" id="3.20.20.70:FF:000397">
    <property type="entry name" value="Putative 12-oxophytodienoate reductase-like protein 2A"/>
    <property type="match status" value="1"/>
</dbReference>
<dbReference type="Gene3D" id="3.20.20.70">
    <property type="entry name" value="Aldolase class I"/>
    <property type="match status" value="1"/>
</dbReference>
<dbReference type="InterPro" id="IPR013785">
    <property type="entry name" value="Aldolase_TIM"/>
</dbReference>
<dbReference type="InterPro" id="IPR001155">
    <property type="entry name" value="OxRdtase_FMN_N"/>
</dbReference>
<dbReference type="InterPro" id="IPR045247">
    <property type="entry name" value="Oye-like"/>
</dbReference>
<dbReference type="PANTHER" id="PTHR22893:SF111">
    <property type="entry name" value="12-OXOPHYTODIENOATE REDUCTASE-LIKE PROTEIN 2A-RELATED"/>
    <property type="match status" value="1"/>
</dbReference>
<dbReference type="PANTHER" id="PTHR22893">
    <property type="entry name" value="NADH OXIDOREDUCTASE-RELATED"/>
    <property type="match status" value="1"/>
</dbReference>
<dbReference type="Pfam" id="PF00724">
    <property type="entry name" value="Oxidored_FMN"/>
    <property type="match status" value="1"/>
</dbReference>
<dbReference type="SUPFAM" id="SSF51395">
    <property type="entry name" value="FMN-linked oxidoreductases"/>
    <property type="match status" value="1"/>
</dbReference>
<reference key="1">
    <citation type="journal article" date="2000" name="Nature">
        <title>Sequence and analysis of chromosome 1 of the plant Arabidopsis thaliana.</title>
        <authorList>
            <person name="Theologis A."/>
            <person name="Ecker J.R."/>
            <person name="Palm C.J."/>
            <person name="Federspiel N.A."/>
            <person name="Kaul S."/>
            <person name="White O."/>
            <person name="Alonso J."/>
            <person name="Altafi H."/>
            <person name="Araujo R."/>
            <person name="Bowman C.L."/>
            <person name="Brooks S.Y."/>
            <person name="Buehler E."/>
            <person name="Chan A."/>
            <person name="Chao Q."/>
            <person name="Chen H."/>
            <person name="Cheuk R.F."/>
            <person name="Chin C.W."/>
            <person name="Chung M.K."/>
            <person name="Conn L."/>
            <person name="Conway A.B."/>
            <person name="Conway A.R."/>
            <person name="Creasy T.H."/>
            <person name="Dewar K."/>
            <person name="Dunn P."/>
            <person name="Etgu P."/>
            <person name="Feldblyum T.V."/>
            <person name="Feng J.-D."/>
            <person name="Fong B."/>
            <person name="Fujii C.Y."/>
            <person name="Gill J.E."/>
            <person name="Goldsmith A.D."/>
            <person name="Haas B."/>
            <person name="Hansen N.F."/>
            <person name="Hughes B."/>
            <person name="Huizar L."/>
            <person name="Hunter J.L."/>
            <person name="Jenkins J."/>
            <person name="Johnson-Hopson C."/>
            <person name="Khan S."/>
            <person name="Khaykin E."/>
            <person name="Kim C.J."/>
            <person name="Koo H.L."/>
            <person name="Kremenetskaia I."/>
            <person name="Kurtz D.B."/>
            <person name="Kwan A."/>
            <person name="Lam B."/>
            <person name="Langin-Hooper S."/>
            <person name="Lee A."/>
            <person name="Lee J.M."/>
            <person name="Lenz C.A."/>
            <person name="Li J.H."/>
            <person name="Li Y.-P."/>
            <person name="Lin X."/>
            <person name="Liu S.X."/>
            <person name="Liu Z.A."/>
            <person name="Luros J.S."/>
            <person name="Maiti R."/>
            <person name="Marziali A."/>
            <person name="Militscher J."/>
            <person name="Miranda M."/>
            <person name="Nguyen M."/>
            <person name="Nierman W.C."/>
            <person name="Osborne B.I."/>
            <person name="Pai G."/>
            <person name="Peterson J."/>
            <person name="Pham P.K."/>
            <person name="Rizzo M."/>
            <person name="Rooney T."/>
            <person name="Rowley D."/>
            <person name="Sakano H."/>
            <person name="Salzberg S.L."/>
            <person name="Schwartz J.R."/>
            <person name="Shinn P."/>
            <person name="Southwick A.M."/>
            <person name="Sun H."/>
            <person name="Tallon L.J."/>
            <person name="Tambunga G."/>
            <person name="Toriumi M.J."/>
            <person name="Town C.D."/>
            <person name="Utterback T."/>
            <person name="Van Aken S."/>
            <person name="Vaysberg M."/>
            <person name="Vysotskaia V.S."/>
            <person name="Walker M."/>
            <person name="Wu D."/>
            <person name="Yu G."/>
            <person name="Fraser C.M."/>
            <person name="Venter J.C."/>
            <person name="Davis R.W."/>
        </authorList>
    </citation>
    <scope>NUCLEOTIDE SEQUENCE [LARGE SCALE GENOMIC DNA]</scope>
    <source>
        <strain>cv. Columbia</strain>
    </source>
</reference>
<reference key="2">
    <citation type="journal article" date="2017" name="Plant J.">
        <title>Araport11: a complete reannotation of the Arabidopsis thaliana reference genome.</title>
        <authorList>
            <person name="Cheng C.Y."/>
            <person name="Krishnakumar V."/>
            <person name="Chan A.P."/>
            <person name="Thibaud-Nissen F."/>
            <person name="Schobel S."/>
            <person name="Town C.D."/>
        </authorList>
    </citation>
    <scope>GENOME REANNOTATION</scope>
    <source>
        <strain>cv. Columbia</strain>
    </source>
</reference>
<reference key="3">
    <citation type="journal article" date="2002" name="Science">
        <title>Functional annotation of a full-length Arabidopsis cDNA collection.</title>
        <authorList>
            <person name="Seki M."/>
            <person name="Narusaka M."/>
            <person name="Kamiya A."/>
            <person name="Ishida J."/>
            <person name="Satou M."/>
            <person name="Sakurai T."/>
            <person name="Nakajima M."/>
            <person name="Enju A."/>
            <person name="Akiyama K."/>
            <person name="Oono Y."/>
            <person name="Muramatsu M."/>
            <person name="Hayashizaki Y."/>
            <person name="Kawai J."/>
            <person name="Carninci P."/>
            <person name="Itoh M."/>
            <person name="Ishii Y."/>
            <person name="Arakawa T."/>
            <person name="Shibata K."/>
            <person name="Shinagawa A."/>
            <person name="Shinozaki K."/>
        </authorList>
    </citation>
    <scope>NUCLEOTIDE SEQUENCE [LARGE SCALE MRNA]</scope>
    <source>
        <strain>cv. Columbia</strain>
    </source>
</reference>
<reference key="4">
    <citation type="journal article" date="2003" name="Science">
        <title>Empirical analysis of transcriptional activity in the Arabidopsis genome.</title>
        <authorList>
            <person name="Yamada K."/>
            <person name="Lim J."/>
            <person name="Dale J.M."/>
            <person name="Chen H."/>
            <person name="Shinn P."/>
            <person name="Palm C.J."/>
            <person name="Southwick A.M."/>
            <person name="Wu H.C."/>
            <person name="Kim C.J."/>
            <person name="Nguyen M."/>
            <person name="Pham P.K."/>
            <person name="Cheuk R.F."/>
            <person name="Karlin-Newmann G."/>
            <person name="Liu S.X."/>
            <person name="Lam B."/>
            <person name="Sakano H."/>
            <person name="Wu T."/>
            <person name="Yu G."/>
            <person name="Miranda M."/>
            <person name="Quach H.L."/>
            <person name="Tripp M."/>
            <person name="Chang C.H."/>
            <person name="Lee J.M."/>
            <person name="Toriumi M.J."/>
            <person name="Chan M.M."/>
            <person name="Tang C.C."/>
            <person name="Onodera C.S."/>
            <person name="Deng J.M."/>
            <person name="Akiyama K."/>
            <person name="Ansari Y."/>
            <person name="Arakawa T."/>
            <person name="Banh J."/>
            <person name="Banno F."/>
            <person name="Bowser L."/>
            <person name="Brooks S.Y."/>
            <person name="Carninci P."/>
            <person name="Chao Q."/>
            <person name="Choy N."/>
            <person name="Enju A."/>
            <person name="Goldsmith A.D."/>
            <person name="Gurjal M."/>
            <person name="Hansen N.F."/>
            <person name="Hayashizaki Y."/>
            <person name="Johnson-Hopson C."/>
            <person name="Hsuan V.W."/>
            <person name="Iida K."/>
            <person name="Karnes M."/>
            <person name="Khan S."/>
            <person name="Koesema E."/>
            <person name="Ishida J."/>
            <person name="Jiang P.X."/>
            <person name="Jones T."/>
            <person name="Kawai J."/>
            <person name="Kamiya A."/>
            <person name="Meyers C."/>
            <person name="Nakajima M."/>
            <person name="Narusaka M."/>
            <person name="Seki M."/>
            <person name="Sakurai T."/>
            <person name="Satou M."/>
            <person name="Tamse R."/>
            <person name="Vaysberg M."/>
            <person name="Wallender E.K."/>
            <person name="Wong C."/>
            <person name="Yamamura Y."/>
            <person name="Yuan S."/>
            <person name="Shinozaki K."/>
            <person name="Davis R.W."/>
            <person name="Theologis A."/>
            <person name="Ecker J.R."/>
        </authorList>
    </citation>
    <scope>NUCLEOTIDE SEQUENCE [LARGE SCALE MRNA]</scope>
    <source>
        <strain>cv. Columbia</strain>
    </source>
</reference>
<sequence length="269" mass="29973">METKQSIPLLMPYKMGPFNLSHRVVLAPLTRSRSYGNIPQPNAKLYYTQRTTPGGLLISESCVVSETSLGYPDLPGLWNRDQVEAWKPIVDAVHSKGGIFFCQIWHGGRVFHQDQPNGEAPVSSTDKPLMCKNMYGGQFKPPRRLRSDELPAIVNDFRIAARNAIEAGFDGVEVHGAHGYLIDQFLKDKVNDRSDQYGGSLENRCRFALEVIEAVVNEIGSDRVGIRLSPFADYMESGDSNPEALGLYLVQAMNKHGMESSTVTWLNLE</sequence>